<organism>
    <name type="scientific">Pongo abelii</name>
    <name type="common">Sumatran orangutan</name>
    <name type="synonym">Pongo pygmaeus abelii</name>
    <dbReference type="NCBI Taxonomy" id="9601"/>
    <lineage>
        <taxon>Eukaryota</taxon>
        <taxon>Metazoa</taxon>
        <taxon>Chordata</taxon>
        <taxon>Craniata</taxon>
        <taxon>Vertebrata</taxon>
        <taxon>Euteleostomi</taxon>
        <taxon>Mammalia</taxon>
        <taxon>Eutheria</taxon>
        <taxon>Euarchontoglires</taxon>
        <taxon>Primates</taxon>
        <taxon>Haplorrhini</taxon>
        <taxon>Catarrhini</taxon>
        <taxon>Hominidae</taxon>
        <taxon>Pongo</taxon>
    </lineage>
</organism>
<reference key="1">
    <citation type="submission" date="2004-11" db="EMBL/GenBank/DDBJ databases">
        <authorList>
            <consortium name="The German cDNA consortium"/>
        </authorList>
    </citation>
    <scope>NUCLEOTIDE SEQUENCE [LARGE SCALE MRNA]</scope>
    <source>
        <tissue>Brain cortex</tissue>
    </source>
</reference>
<gene>
    <name type="primary">BRIX1</name>
    <name type="synonym">BRIX</name>
    <name type="synonym">BXDC2</name>
</gene>
<sequence length="353" mass="41370">MAATKRKRRGGFAVQAKKPKRNEKDAEPPAKRHATAEEVEEEERDRIPGPVCKGKWKNKERILIFSSRGINFRTRHLMQDLRMLMPHSKADTKMDRKDKLFVINEVCEMKNCNKCIYFEAKKKQDLYMWLSNSPHGPSAKFLVQNIHTLAELKMTGNCLKGSRPLLSFDPAFDELPHYALLKELLIQILSTPRYHPKSQPFVDHVFTFTILDNRIWFRNFQIIEEDAALVEIGPRFVLNLIKIFQGSFGGPTLYENPHYQSPNMHRRVTRSITAAKYREKQQVKDVQKLRKKEPKTLLPHDPTADVFVTPAEEKPIEIQWVKPEPKVDLKARKKRIYKRQRKMKQRMDSGKTK</sequence>
<dbReference type="EMBL" id="CR858983">
    <property type="protein sequence ID" value="CAH91178.1"/>
    <property type="molecule type" value="mRNA"/>
</dbReference>
<dbReference type="RefSeq" id="NP_001125690.1">
    <property type="nucleotide sequence ID" value="NM_001132218.1"/>
</dbReference>
<dbReference type="SMR" id="Q5RAN2"/>
<dbReference type="FunCoup" id="Q5RAN2">
    <property type="interactions" value="2576"/>
</dbReference>
<dbReference type="STRING" id="9601.ENSPPYP00000017190"/>
<dbReference type="GeneID" id="100172612"/>
<dbReference type="KEGG" id="pon:100172612"/>
<dbReference type="CTD" id="55299"/>
<dbReference type="eggNOG" id="KOG2971">
    <property type="taxonomic scope" value="Eukaryota"/>
</dbReference>
<dbReference type="InParanoid" id="Q5RAN2"/>
<dbReference type="OrthoDB" id="1638493at2759"/>
<dbReference type="Proteomes" id="UP000001595">
    <property type="component" value="Unplaced"/>
</dbReference>
<dbReference type="GO" id="GO:0005730">
    <property type="term" value="C:nucleolus"/>
    <property type="evidence" value="ECO:0007669"/>
    <property type="project" value="UniProtKB-SubCell"/>
</dbReference>
<dbReference type="GO" id="GO:0019843">
    <property type="term" value="F:rRNA binding"/>
    <property type="evidence" value="ECO:0007669"/>
    <property type="project" value="InterPro"/>
</dbReference>
<dbReference type="GO" id="GO:0000027">
    <property type="term" value="P:ribosomal large subunit assembly"/>
    <property type="evidence" value="ECO:0007669"/>
    <property type="project" value="TreeGrafter"/>
</dbReference>
<dbReference type="GO" id="GO:0006364">
    <property type="term" value="P:rRNA processing"/>
    <property type="evidence" value="ECO:0007669"/>
    <property type="project" value="InterPro"/>
</dbReference>
<dbReference type="FunFam" id="3.40.50.10480:FF:000003">
    <property type="entry name" value="Ribosome biogenesis protein BRX1"/>
    <property type="match status" value="1"/>
</dbReference>
<dbReference type="Gene3D" id="3.40.50.10480">
    <property type="entry name" value="Probable brix-domain ribosomal biogenesis protein"/>
    <property type="match status" value="1"/>
</dbReference>
<dbReference type="InterPro" id="IPR007109">
    <property type="entry name" value="Brix"/>
</dbReference>
<dbReference type="InterPro" id="IPR026532">
    <property type="entry name" value="BRX1"/>
</dbReference>
<dbReference type="PANTHER" id="PTHR13634">
    <property type="entry name" value="RIBOSOME BIOGENESIS PROTEIN BRIX"/>
    <property type="match status" value="1"/>
</dbReference>
<dbReference type="PANTHER" id="PTHR13634:SF0">
    <property type="entry name" value="RIBOSOME BIOGENESIS PROTEIN BRX1 HOMOLOG"/>
    <property type="match status" value="1"/>
</dbReference>
<dbReference type="Pfam" id="PF04427">
    <property type="entry name" value="Brix"/>
    <property type="match status" value="1"/>
</dbReference>
<dbReference type="SMART" id="SM00879">
    <property type="entry name" value="Brix"/>
    <property type="match status" value="1"/>
</dbReference>
<dbReference type="SUPFAM" id="SSF52954">
    <property type="entry name" value="Class II aaRS ABD-related"/>
    <property type="match status" value="1"/>
</dbReference>
<dbReference type="PROSITE" id="PS50833">
    <property type="entry name" value="BRIX"/>
    <property type="match status" value="1"/>
</dbReference>
<feature type="chain" id="PRO_0000269724" description="Ribosome biogenesis protein BRX1 homolog">
    <location>
        <begin position="1"/>
        <end position="353"/>
    </location>
</feature>
<feature type="domain" description="Brix" evidence="3">
    <location>
        <begin position="60"/>
        <end position="249"/>
    </location>
</feature>
<feature type="region of interest" description="Disordered" evidence="4">
    <location>
        <begin position="1"/>
        <end position="46"/>
    </location>
</feature>
<feature type="compositionally biased region" description="Basic residues" evidence="4">
    <location>
        <begin position="1"/>
        <end position="10"/>
    </location>
</feature>
<feature type="compositionally biased region" description="Basic and acidic residues" evidence="4">
    <location>
        <begin position="22"/>
        <end position="36"/>
    </location>
</feature>
<feature type="modified residue" description="Phosphoserine" evidence="2">
    <location>
        <position position="261"/>
    </location>
</feature>
<feature type="modified residue" description="N6-acetyllysine" evidence="2">
    <location>
        <position position="276"/>
    </location>
</feature>
<feature type="cross-link" description="Glycyl lysine isopeptide (Lys-Gly) (interchain with G-Cter in SUMO2)" evidence="2">
    <location>
        <position position="160"/>
    </location>
</feature>
<feature type="cross-link" description="Glycyl lysine isopeptide (Lys-Gly) (interchain with G-Cter in SUMO2)" evidence="2">
    <location>
        <position position="314"/>
    </location>
</feature>
<feature type="cross-link" description="Glycyl lysine isopeptide (Lys-Gly) (interchain with G-Cter in SUMO2)" evidence="2">
    <location>
        <position position="322"/>
    </location>
</feature>
<evidence type="ECO:0000250" key="1"/>
<evidence type="ECO:0000250" key="2">
    <source>
        <dbReference type="UniProtKB" id="Q8TDN6"/>
    </source>
</evidence>
<evidence type="ECO:0000255" key="3">
    <source>
        <dbReference type="PROSITE-ProRule" id="PRU00034"/>
    </source>
</evidence>
<evidence type="ECO:0000256" key="4">
    <source>
        <dbReference type="SAM" id="MobiDB-lite"/>
    </source>
</evidence>
<evidence type="ECO:0000305" key="5"/>
<comment type="function">
    <text evidence="1">Required for biogenesis of the 60S ribosomal subunit.</text>
</comment>
<comment type="subcellular location">
    <subcellularLocation>
        <location evidence="1">Nucleus</location>
        <location evidence="1">Nucleolus</location>
    </subcellularLocation>
</comment>
<comment type="similarity">
    <text evidence="5">Belongs to the BRX1 family.</text>
</comment>
<name>BRX1_PONAB</name>
<protein>
    <recommendedName>
        <fullName>Ribosome biogenesis protein BRX1 homolog</fullName>
    </recommendedName>
    <alternativeName>
        <fullName>Brix domain-containing protein 2</fullName>
    </alternativeName>
</protein>
<keyword id="KW-0007">Acetylation</keyword>
<keyword id="KW-1017">Isopeptide bond</keyword>
<keyword id="KW-0539">Nucleus</keyword>
<keyword id="KW-0597">Phosphoprotein</keyword>
<keyword id="KW-1185">Reference proteome</keyword>
<keyword id="KW-0690">Ribosome biogenesis</keyword>
<keyword id="KW-0832">Ubl conjugation</keyword>
<accession>Q5RAN2</accession>
<proteinExistence type="evidence at transcript level"/>